<protein>
    <recommendedName>
        <fullName>Gamma-glutamyl-gamma-aminobutyrate hydrolase</fullName>
        <shortName>Gamma-Glu-GABA hydrolase</shortName>
        <ecNumber>3.5.1.94</ecNumber>
    </recommendedName>
</protein>
<evidence type="ECO:0000250" key="1"/>
<evidence type="ECO:0000255" key="2">
    <source>
        <dbReference type="PROSITE-ProRule" id="PRU00605"/>
    </source>
</evidence>
<evidence type="ECO:0000305" key="3"/>
<comment type="function">
    <text evidence="1">Involved in the breakdown of putrescine via hydrolysis of the gamma-glutamyl linkage of gamma-glutamyl-gamma-aminobutyrate.</text>
</comment>
<comment type="catalytic activity">
    <reaction>
        <text>4-(gamma-L-glutamylamino)butanoate + H2O = 4-aminobutanoate + L-glutamate</text>
        <dbReference type="Rhea" id="RHEA:19737"/>
        <dbReference type="ChEBI" id="CHEBI:15377"/>
        <dbReference type="ChEBI" id="CHEBI:29985"/>
        <dbReference type="ChEBI" id="CHEBI:58800"/>
        <dbReference type="ChEBI" id="CHEBI:59888"/>
        <dbReference type="EC" id="3.5.1.94"/>
    </reaction>
</comment>
<comment type="pathway">
    <text>Amine and polyamine degradation; putrescine degradation; 4-aminobutanoate from putrescine: step 4/4.</text>
</comment>
<comment type="similarity">
    <text evidence="3">Belongs to the peptidase C26 family.</text>
</comment>
<comment type="sequence caution" evidence="3">
    <conflict type="erroneous initiation">
        <sequence resource="EMBL-CDS" id="AAN42914"/>
    </conflict>
</comment>
<comment type="sequence caution" evidence="3">
    <conflict type="erroneous initiation">
        <sequence resource="EMBL-CDS" id="AAP16796"/>
    </conflict>
</comment>
<organism>
    <name type="scientific">Shigella flexneri</name>
    <dbReference type="NCBI Taxonomy" id="623"/>
    <lineage>
        <taxon>Bacteria</taxon>
        <taxon>Pseudomonadati</taxon>
        <taxon>Pseudomonadota</taxon>
        <taxon>Gammaproteobacteria</taxon>
        <taxon>Enterobacterales</taxon>
        <taxon>Enterobacteriaceae</taxon>
        <taxon>Shigella</taxon>
    </lineage>
</organism>
<dbReference type="EC" id="3.5.1.94"/>
<dbReference type="EMBL" id="AE005674">
    <property type="protein sequence ID" value="AAN42914.2"/>
    <property type="status" value="ALT_INIT"/>
    <property type="molecule type" value="Genomic_DNA"/>
</dbReference>
<dbReference type="EMBL" id="AE014073">
    <property type="protein sequence ID" value="AAP16796.1"/>
    <property type="status" value="ALT_INIT"/>
    <property type="molecule type" value="Genomic_DNA"/>
</dbReference>
<dbReference type="RefSeq" id="NP_707207.2">
    <property type="nucleotide sequence ID" value="NC_004337.2"/>
</dbReference>
<dbReference type="RefSeq" id="WP_005049729.1">
    <property type="nucleotide sequence ID" value="NZ_WPGW01000009.1"/>
</dbReference>
<dbReference type="SMR" id="Q83LB6"/>
<dbReference type="STRING" id="198214.SF1303"/>
<dbReference type="MEROPS" id="C26.961"/>
<dbReference type="PaxDb" id="198214-SF1303"/>
<dbReference type="GeneID" id="1027800"/>
<dbReference type="KEGG" id="sfl:SF1303"/>
<dbReference type="KEGG" id="sfx:S1385"/>
<dbReference type="PATRIC" id="fig|198214.7.peg.1529"/>
<dbReference type="HOGENOM" id="CLU_030756_0_0_6"/>
<dbReference type="UniPathway" id="UPA00188">
    <property type="reaction ID" value="UER00883"/>
</dbReference>
<dbReference type="Proteomes" id="UP000001006">
    <property type="component" value="Chromosome"/>
</dbReference>
<dbReference type="Proteomes" id="UP000002673">
    <property type="component" value="Chromosome"/>
</dbReference>
<dbReference type="GO" id="GO:0005829">
    <property type="term" value="C:cytosol"/>
    <property type="evidence" value="ECO:0007669"/>
    <property type="project" value="TreeGrafter"/>
</dbReference>
<dbReference type="GO" id="GO:0033969">
    <property type="term" value="F:gamma-glutamyl-gamma-aminobutyrate hydrolase activity"/>
    <property type="evidence" value="ECO:0007669"/>
    <property type="project" value="UniProtKB-EC"/>
</dbReference>
<dbReference type="GO" id="GO:0009447">
    <property type="term" value="P:putrescine catabolic process"/>
    <property type="evidence" value="ECO:0007669"/>
    <property type="project" value="UniProtKB-UniPathway"/>
</dbReference>
<dbReference type="CDD" id="cd01745">
    <property type="entry name" value="GATase1_2"/>
    <property type="match status" value="1"/>
</dbReference>
<dbReference type="FunFam" id="3.40.50.880:FF:000030">
    <property type="entry name" value="Gamma-glutamyl-gamma-aminobutyrate hydrolase PuuD"/>
    <property type="match status" value="1"/>
</dbReference>
<dbReference type="Gene3D" id="3.40.50.880">
    <property type="match status" value="1"/>
</dbReference>
<dbReference type="InterPro" id="IPR029062">
    <property type="entry name" value="Class_I_gatase-like"/>
</dbReference>
<dbReference type="InterPro" id="IPR011697">
    <property type="entry name" value="Peptidase_C26"/>
</dbReference>
<dbReference type="InterPro" id="IPR044668">
    <property type="entry name" value="PuuD-like"/>
</dbReference>
<dbReference type="NCBIfam" id="NF008471">
    <property type="entry name" value="PRK11366.1"/>
    <property type="match status" value="1"/>
</dbReference>
<dbReference type="PANTHER" id="PTHR43235">
    <property type="entry name" value="GLUTAMINE AMIDOTRANSFERASE PB2B2.05-RELATED"/>
    <property type="match status" value="1"/>
</dbReference>
<dbReference type="PANTHER" id="PTHR43235:SF1">
    <property type="entry name" value="GLUTAMINE AMIDOTRANSFERASE PB2B2.05-RELATED"/>
    <property type="match status" value="1"/>
</dbReference>
<dbReference type="Pfam" id="PF07722">
    <property type="entry name" value="Peptidase_C26"/>
    <property type="match status" value="1"/>
</dbReference>
<dbReference type="SUPFAM" id="SSF52317">
    <property type="entry name" value="Class I glutamine amidotransferase-like"/>
    <property type="match status" value="1"/>
</dbReference>
<dbReference type="PROSITE" id="PS51273">
    <property type="entry name" value="GATASE_TYPE_1"/>
    <property type="match status" value="1"/>
</dbReference>
<feature type="chain" id="PRO_0000272688" description="Gamma-glutamyl-gamma-aminobutyrate hydrolase">
    <location>
        <begin position="1"/>
        <end position="254"/>
    </location>
</feature>
<feature type="domain" description="Glutamine amidotransferase type-1" evidence="2">
    <location>
        <begin position="16"/>
        <end position="250"/>
    </location>
</feature>
<feature type="active site" description="Nucleophile" evidence="2">
    <location>
        <position position="114"/>
    </location>
</feature>
<feature type="active site" evidence="2">
    <location>
        <position position="222"/>
    </location>
</feature>
<feature type="active site" evidence="2">
    <location>
        <position position="224"/>
    </location>
</feature>
<gene>
    <name type="primary">puuD</name>
    <name type="ordered locus">SF1303</name>
    <name type="ordered locus">S1385</name>
</gene>
<accession>Q83LB6</accession>
<accession>Q7UCQ2</accession>
<keyword id="KW-0315">Glutamine amidotransferase</keyword>
<keyword id="KW-0378">Hydrolase</keyword>
<keyword id="KW-1185">Reference proteome</keyword>
<name>PUUD_SHIFL</name>
<proteinExistence type="inferred from homology"/>
<sequence length="254" mass="28126">MENIMNNPVIGVVMCRNRLKGHATQTLQEKYLNAIIHAGGLPIALPHALAEPSLLEQLLPKLDGIYLPSSPSNVQPHLYGENGDEPDADPGRDLLSMAIINAALERRIPIFAICRGLQELVVATGGSLHRKLCEQPELLEHREDPELPVEQQYAPSHEVQVEEGGLLSALLPECSNFWVNSLHGQGAKVVSPRLRVEARSPDGLVEAVSVINHPFALGVQWHPEWNSSEYALSRILFEGFITAWQHHIAEKQRL</sequence>
<reference key="1">
    <citation type="journal article" date="2002" name="Nucleic Acids Res.">
        <title>Genome sequence of Shigella flexneri 2a: insights into pathogenicity through comparison with genomes of Escherichia coli K12 and O157.</title>
        <authorList>
            <person name="Jin Q."/>
            <person name="Yuan Z."/>
            <person name="Xu J."/>
            <person name="Wang Y."/>
            <person name="Shen Y."/>
            <person name="Lu W."/>
            <person name="Wang J."/>
            <person name="Liu H."/>
            <person name="Yang J."/>
            <person name="Yang F."/>
            <person name="Zhang X."/>
            <person name="Zhang J."/>
            <person name="Yang G."/>
            <person name="Wu H."/>
            <person name="Qu D."/>
            <person name="Dong J."/>
            <person name="Sun L."/>
            <person name="Xue Y."/>
            <person name="Zhao A."/>
            <person name="Gao Y."/>
            <person name="Zhu J."/>
            <person name="Kan B."/>
            <person name="Ding K."/>
            <person name="Chen S."/>
            <person name="Cheng H."/>
            <person name="Yao Z."/>
            <person name="He B."/>
            <person name="Chen R."/>
            <person name="Ma D."/>
            <person name="Qiang B."/>
            <person name="Wen Y."/>
            <person name="Hou Y."/>
            <person name="Yu J."/>
        </authorList>
    </citation>
    <scope>NUCLEOTIDE SEQUENCE [LARGE SCALE GENOMIC DNA]</scope>
    <source>
        <strain>301 / Serotype 2a</strain>
    </source>
</reference>
<reference key="2">
    <citation type="journal article" date="2003" name="Infect. Immun.">
        <title>Complete genome sequence and comparative genomics of Shigella flexneri serotype 2a strain 2457T.</title>
        <authorList>
            <person name="Wei J."/>
            <person name="Goldberg M.B."/>
            <person name="Burland V."/>
            <person name="Venkatesan M.M."/>
            <person name="Deng W."/>
            <person name="Fournier G."/>
            <person name="Mayhew G.F."/>
            <person name="Plunkett G. III"/>
            <person name="Rose D.J."/>
            <person name="Darling A."/>
            <person name="Mau B."/>
            <person name="Perna N.T."/>
            <person name="Payne S.M."/>
            <person name="Runyen-Janecky L.J."/>
            <person name="Zhou S."/>
            <person name="Schwartz D.C."/>
            <person name="Blattner F.R."/>
        </authorList>
    </citation>
    <scope>NUCLEOTIDE SEQUENCE [LARGE SCALE GENOMIC DNA]</scope>
    <source>
        <strain>ATCC 700930 / 2457T / Serotype 2a</strain>
    </source>
</reference>